<protein>
    <recommendedName>
        <fullName evidence="1">Methionyl-tRNA formyltransferase</fullName>
        <ecNumber evidence="1">2.1.2.9</ecNumber>
    </recommendedName>
</protein>
<name>FMT_THET2</name>
<dbReference type="EC" id="2.1.2.9" evidence="1"/>
<dbReference type="EMBL" id="AE017221">
    <property type="protein sequence ID" value="AAS82005.1"/>
    <property type="molecule type" value="Genomic_DNA"/>
</dbReference>
<dbReference type="RefSeq" id="WP_011174029.1">
    <property type="nucleotide sequence ID" value="NC_005835.1"/>
</dbReference>
<dbReference type="SMR" id="Q72H32"/>
<dbReference type="KEGG" id="tth:TT_C1663"/>
<dbReference type="eggNOG" id="COG0223">
    <property type="taxonomic scope" value="Bacteria"/>
</dbReference>
<dbReference type="HOGENOM" id="CLU_033347_2_0_0"/>
<dbReference type="OrthoDB" id="9802815at2"/>
<dbReference type="Proteomes" id="UP000000592">
    <property type="component" value="Chromosome"/>
</dbReference>
<dbReference type="GO" id="GO:0005829">
    <property type="term" value="C:cytosol"/>
    <property type="evidence" value="ECO:0007669"/>
    <property type="project" value="TreeGrafter"/>
</dbReference>
<dbReference type="GO" id="GO:0004479">
    <property type="term" value="F:methionyl-tRNA formyltransferase activity"/>
    <property type="evidence" value="ECO:0007669"/>
    <property type="project" value="UniProtKB-UniRule"/>
</dbReference>
<dbReference type="CDD" id="cd08646">
    <property type="entry name" value="FMT_core_Met-tRNA-FMT_N"/>
    <property type="match status" value="1"/>
</dbReference>
<dbReference type="CDD" id="cd08704">
    <property type="entry name" value="Met_tRNA_FMT_C"/>
    <property type="match status" value="1"/>
</dbReference>
<dbReference type="Gene3D" id="3.40.50.12230">
    <property type="match status" value="1"/>
</dbReference>
<dbReference type="HAMAP" id="MF_00182">
    <property type="entry name" value="Formyl_trans"/>
    <property type="match status" value="1"/>
</dbReference>
<dbReference type="InterPro" id="IPR005794">
    <property type="entry name" value="Fmt"/>
</dbReference>
<dbReference type="InterPro" id="IPR005793">
    <property type="entry name" value="Formyl_trans_C"/>
</dbReference>
<dbReference type="InterPro" id="IPR002376">
    <property type="entry name" value="Formyl_transf_N"/>
</dbReference>
<dbReference type="InterPro" id="IPR036477">
    <property type="entry name" value="Formyl_transf_N_sf"/>
</dbReference>
<dbReference type="InterPro" id="IPR011034">
    <property type="entry name" value="Formyl_transferase-like_C_sf"/>
</dbReference>
<dbReference type="InterPro" id="IPR044135">
    <property type="entry name" value="Met-tRNA-FMT_C"/>
</dbReference>
<dbReference type="InterPro" id="IPR041711">
    <property type="entry name" value="Met-tRNA-FMT_N"/>
</dbReference>
<dbReference type="NCBIfam" id="TIGR00460">
    <property type="entry name" value="fmt"/>
    <property type="match status" value="1"/>
</dbReference>
<dbReference type="PANTHER" id="PTHR11138">
    <property type="entry name" value="METHIONYL-TRNA FORMYLTRANSFERASE"/>
    <property type="match status" value="1"/>
</dbReference>
<dbReference type="PANTHER" id="PTHR11138:SF5">
    <property type="entry name" value="METHIONYL-TRNA FORMYLTRANSFERASE, MITOCHONDRIAL"/>
    <property type="match status" value="1"/>
</dbReference>
<dbReference type="Pfam" id="PF02911">
    <property type="entry name" value="Formyl_trans_C"/>
    <property type="match status" value="1"/>
</dbReference>
<dbReference type="Pfam" id="PF00551">
    <property type="entry name" value="Formyl_trans_N"/>
    <property type="match status" value="1"/>
</dbReference>
<dbReference type="SUPFAM" id="SSF50486">
    <property type="entry name" value="FMT C-terminal domain-like"/>
    <property type="match status" value="1"/>
</dbReference>
<dbReference type="SUPFAM" id="SSF53328">
    <property type="entry name" value="Formyltransferase"/>
    <property type="match status" value="1"/>
</dbReference>
<feature type="chain" id="PRO_0000083072" description="Methionyl-tRNA formyltransferase">
    <location>
        <begin position="1"/>
        <end position="305"/>
    </location>
</feature>
<feature type="binding site" evidence="1">
    <location>
        <begin position="108"/>
        <end position="111"/>
    </location>
    <ligand>
        <name>(6S)-5,6,7,8-tetrahydrofolate</name>
        <dbReference type="ChEBI" id="CHEBI:57453"/>
    </ligand>
</feature>
<gene>
    <name evidence="1" type="primary">fmt</name>
    <name type="ordered locus">TT_C1663</name>
</gene>
<evidence type="ECO:0000255" key="1">
    <source>
        <dbReference type="HAMAP-Rule" id="MF_00182"/>
    </source>
</evidence>
<accession>Q72H32</accession>
<organism>
    <name type="scientific">Thermus thermophilus (strain ATCC BAA-163 / DSM 7039 / HB27)</name>
    <dbReference type="NCBI Taxonomy" id="262724"/>
    <lineage>
        <taxon>Bacteria</taxon>
        <taxon>Thermotogati</taxon>
        <taxon>Deinococcota</taxon>
        <taxon>Deinococci</taxon>
        <taxon>Thermales</taxon>
        <taxon>Thermaceae</taxon>
        <taxon>Thermus</taxon>
    </lineage>
</organism>
<keyword id="KW-0648">Protein biosynthesis</keyword>
<keyword id="KW-0808">Transferase</keyword>
<proteinExistence type="inferred from homology"/>
<sequence>MRVAFFGTPLWAVPVLDALRKRHQVVLVVSQPDKPQGRGLRPAPSPVARYAEAEGLPLLRPARLREEAFLEALRQAAPEVAVVAAYGKLIPKEALDIPPHGFLNLHPSLLPKYRGAAPVQRALLAGERETGVSIMRLDEGLDTGPLYAVWRTPILPDEDAVALGNRLRDKGVELLLEVLERLPELTPRPQEGEVSYAPPLSKEEGRLDFGESAEALYRRHRAVQPWPGSYFFHRGRRVKALRLRPEPGEGEPGVVARVGPEGVAVGTASGLLLLLEVQPEGRRAMPAADWARGYGVAPGTRLGQV</sequence>
<comment type="function">
    <text evidence="1">Attaches a formyl group to the free amino group of methionyl-tRNA(fMet). The formyl group appears to play a dual role in the initiator identity of N-formylmethionyl-tRNA by promoting its recognition by IF2 and preventing the misappropriation of this tRNA by the elongation apparatus.</text>
</comment>
<comment type="catalytic activity">
    <reaction evidence="1">
        <text>L-methionyl-tRNA(fMet) + (6R)-10-formyltetrahydrofolate = N-formyl-L-methionyl-tRNA(fMet) + (6S)-5,6,7,8-tetrahydrofolate + H(+)</text>
        <dbReference type="Rhea" id="RHEA:24380"/>
        <dbReference type="Rhea" id="RHEA-COMP:9952"/>
        <dbReference type="Rhea" id="RHEA-COMP:9953"/>
        <dbReference type="ChEBI" id="CHEBI:15378"/>
        <dbReference type="ChEBI" id="CHEBI:57453"/>
        <dbReference type="ChEBI" id="CHEBI:78530"/>
        <dbReference type="ChEBI" id="CHEBI:78844"/>
        <dbReference type="ChEBI" id="CHEBI:195366"/>
        <dbReference type="EC" id="2.1.2.9"/>
    </reaction>
</comment>
<comment type="similarity">
    <text evidence="1">Belongs to the Fmt family.</text>
</comment>
<reference key="1">
    <citation type="journal article" date="2004" name="Nat. Biotechnol.">
        <title>The genome sequence of the extreme thermophile Thermus thermophilus.</title>
        <authorList>
            <person name="Henne A."/>
            <person name="Brueggemann H."/>
            <person name="Raasch C."/>
            <person name="Wiezer A."/>
            <person name="Hartsch T."/>
            <person name="Liesegang H."/>
            <person name="Johann A."/>
            <person name="Lienard T."/>
            <person name="Gohl O."/>
            <person name="Martinez-Arias R."/>
            <person name="Jacobi C."/>
            <person name="Starkuviene V."/>
            <person name="Schlenczeck S."/>
            <person name="Dencker S."/>
            <person name="Huber R."/>
            <person name="Klenk H.-P."/>
            <person name="Kramer W."/>
            <person name="Merkl R."/>
            <person name="Gottschalk G."/>
            <person name="Fritz H.-J."/>
        </authorList>
    </citation>
    <scope>NUCLEOTIDE SEQUENCE [LARGE SCALE GENOMIC DNA]</scope>
    <source>
        <strain>ATCC BAA-163 / DSM 7039 / HB27</strain>
    </source>
</reference>